<comment type="function">
    <text evidence="1">Component of the Mediator complex, a coactivator involved in the regulated transcription of nearly all RNA polymerase II-dependent genes. Mediator functions as a bridge to convey information from gene-specific regulatory proteins to the basal RNA polymerase II transcription machinery. Mediator is recruited to promoters by direct interactions with regulatory proteins and serves as a scaffold for the assembly of a functional preinitiation complex with RNA polymerase II and the general transcription factors (By similarity).</text>
</comment>
<comment type="subunit">
    <text evidence="1">Component of the Mediator complex.</text>
</comment>
<comment type="subcellular location">
    <subcellularLocation>
        <location evidence="2">Nucleus</location>
    </subcellularLocation>
</comment>
<comment type="similarity">
    <text evidence="2">Belongs to the Mediator complex subunit 16 family.</text>
</comment>
<reference key="1">
    <citation type="journal article" date="2008" name="PLoS Genet.">
        <title>Genomic islands in the pathogenic filamentous fungus Aspergillus fumigatus.</title>
        <authorList>
            <person name="Fedorova N.D."/>
            <person name="Khaldi N."/>
            <person name="Joardar V.S."/>
            <person name="Maiti R."/>
            <person name="Amedeo P."/>
            <person name="Anderson M.J."/>
            <person name="Crabtree J."/>
            <person name="Silva J.C."/>
            <person name="Badger J.H."/>
            <person name="Albarraq A."/>
            <person name="Angiuoli S."/>
            <person name="Bussey H."/>
            <person name="Bowyer P."/>
            <person name="Cotty P.J."/>
            <person name="Dyer P.S."/>
            <person name="Egan A."/>
            <person name="Galens K."/>
            <person name="Fraser-Liggett C.M."/>
            <person name="Haas B.J."/>
            <person name="Inman J.M."/>
            <person name="Kent R."/>
            <person name="Lemieux S."/>
            <person name="Malavazi I."/>
            <person name="Orvis J."/>
            <person name="Roemer T."/>
            <person name="Ronning C.M."/>
            <person name="Sundaram J.P."/>
            <person name="Sutton G."/>
            <person name="Turner G."/>
            <person name="Venter J.C."/>
            <person name="White O.R."/>
            <person name="Whitty B.R."/>
            <person name="Youngman P."/>
            <person name="Wolfe K.H."/>
            <person name="Goldman G.H."/>
            <person name="Wortman J.R."/>
            <person name="Jiang B."/>
            <person name="Denning D.W."/>
            <person name="Nierman W.C."/>
        </authorList>
    </citation>
    <scope>NUCLEOTIDE SEQUENCE [LARGE SCALE GENOMIC DNA]</scope>
    <source>
        <strain>ATCC 1020 / DSM 3700 / CBS 544.65 / FGSC A1164 / JCM 1740 / NRRL 181 / WB 181</strain>
    </source>
</reference>
<sequence length="955" mass="104664">MPLIMEDGINVDDLFGEPGSLELGLSPSTPSPRGLAQRLDEMRLIGCCQKIAWSKLGCIAYISQDGLRVNVRHLQCRPSDGKWVLSEETPLLPVTDAHGGHTLVHLCWNEPGAELAVADSSGRVSIYSISIALNSIAGHRQAAFDPDDDGAQIVGMMWLNTQRTVHSFYQAAKVQGRWAYSPFRRRPIGPFHPVNKAGLVCVTRSGIIRLLYQNPDSRWAEISAELKNTGYSDRLLTHAALVSTQGGILVATHSACQKICLYRVHIAWTPTQYDPGQQKPPAPWPVPSFRFLHCKVESQCDVPGTNRNAGDNAQGLPSFTNSFYCLTGLDIVLPALDNPAGSTANPWVVAIYSAPLHVTQDHPQQQGPASVIVRWQLDTGPLTLHPKFDDVPSKKNNAQVKPKLELRRLDDVYSDKYAISIDQIEYGNVLAITYDDGSVVFYDPKTMAVFNGVDDANTVTSLAQAGFHHPPEPSGLHISFSPNACAAVMLDGEGQTHLRLTEHSYGAEGGLHDENKYSAAIAALTLAFCRGCGSDVNTDDILLILVRQLTPEAQATFINEAYRALPINCNFTVEQDKLMNHPYIPRCLSIQAALGFKNKYTPRSFASSIPWAVLQLRHASVLYAFFFQYNKGGATEPHDPDVLRMVLGNTKWALDFSFYVLNELFDLADDFESLSGDQEAFTQKLKSTSSLPLIILLSSMSRAFLRFICRGLRGIYAGYATAAPLSGDARVYYAEIYQTLESAPIRIDAYEKFLAGVDSAVRHAYHGAGFGDAERPGPEKELLVNARVPPVLVPAVSTILRQTVPALKTEIDRITIYMGDYSWLGLSNDRRTEMYRRNRDVDIIKKIPCRPAASALPETNANANANQNGKSSTQVQQRRRRCVRCCEVSSDTHPPRSLLSFRMIAKLGLLRACVCGGMWTLEPSVYSSAQSSGAPVGQATGRTPALMAAGLAGSS</sequence>
<protein>
    <recommendedName>
        <fullName>Mediator of RNA polymerase II transcription subunit 16</fullName>
    </recommendedName>
    <alternativeName>
        <fullName>Mediator complex subunit 16</fullName>
    </alternativeName>
</protein>
<evidence type="ECO:0000250" key="1"/>
<evidence type="ECO:0000305" key="2"/>
<keyword id="KW-0010">Activator</keyword>
<keyword id="KW-0539">Nucleus</keyword>
<keyword id="KW-1185">Reference proteome</keyword>
<keyword id="KW-0804">Transcription</keyword>
<keyword id="KW-0805">Transcription regulation</keyword>
<gene>
    <name type="primary">sin4</name>
    <name type="synonym">med16</name>
    <name type="ORF">NFIA_015120</name>
</gene>
<organism>
    <name type="scientific">Neosartorya fischeri (strain ATCC 1020 / DSM 3700 / CBS 544.65 / FGSC A1164 / JCM 1740 / NRRL 181 / WB 181)</name>
    <name type="common">Aspergillus fischerianus</name>
    <dbReference type="NCBI Taxonomy" id="331117"/>
    <lineage>
        <taxon>Eukaryota</taxon>
        <taxon>Fungi</taxon>
        <taxon>Dikarya</taxon>
        <taxon>Ascomycota</taxon>
        <taxon>Pezizomycotina</taxon>
        <taxon>Eurotiomycetes</taxon>
        <taxon>Eurotiomycetidae</taxon>
        <taxon>Eurotiales</taxon>
        <taxon>Aspergillaceae</taxon>
        <taxon>Aspergillus</taxon>
        <taxon>Aspergillus subgen. Fumigati</taxon>
    </lineage>
</organism>
<accession>A1D327</accession>
<feature type="chain" id="PRO_0000307630" description="Mediator of RNA polymerase II transcription subunit 16">
    <location>
        <begin position="1"/>
        <end position="955"/>
    </location>
</feature>
<proteinExistence type="inferred from homology"/>
<dbReference type="EMBL" id="DS027688">
    <property type="protein sequence ID" value="EAW22820.1"/>
    <property type="molecule type" value="Genomic_DNA"/>
</dbReference>
<dbReference type="RefSeq" id="XP_001264717.1">
    <property type="nucleotide sequence ID" value="XM_001264716.1"/>
</dbReference>
<dbReference type="STRING" id="331117.A1D327"/>
<dbReference type="EnsemblFungi" id="EAW22820">
    <property type="protein sequence ID" value="EAW22820"/>
    <property type="gene ID" value="NFIA_015120"/>
</dbReference>
<dbReference type="GeneID" id="4590885"/>
<dbReference type="KEGG" id="nfi:NFIA_015120"/>
<dbReference type="VEuPathDB" id="FungiDB:NFIA_015120"/>
<dbReference type="eggNOG" id="ENOG502QQU3">
    <property type="taxonomic scope" value="Eukaryota"/>
</dbReference>
<dbReference type="HOGENOM" id="CLU_007624_0_0_1"/>
<dbReference type="OMA" id="FDTTWLG"/>
<dbReference type="OrthoDB" id="4139168at2759"/>
<dbReference type="Proteomes" id="UP000006702">
    <property type="component" value="Unassembled WGS sequence"/>
</dbReference>
<dbReference type="GO" id="GO:0016592">
    <property type="term" value="C:mediator complex"/>
    <property type="evidence" value="ECO:0007669"/>
    <property type="project" value="InterPro"/>
</dbReference>
<dbReference type="GO" id="GO:0045893">
    <property type="term" value="P:positive regulation of DNA-templated transcription"/>
    <property type="evidence" value="ECO:0007669"/>
    <property type="project" value="TreeGrafter"/>
</dbReference>
<dbReference type="InterPro" id="IPR048338">
    <property type="entry name" value="Mediator_Med16"/>
</dbReference>
<dbReference type="InterPro" id="IPR048339">
    <property type="entry name" value="Mediator_Med16_C"/>
</dbReference>
<dbReference type="InterPro" id="IPR021665">
    <property type="entry name" value="Mediator_Med16_N"/>
</dbReference>
<dbReference type="InterPro" id="IPR036322">
    <property type="entry name" value="WD40_repeat_dom_sf"/>
</dbReference>
<dbReference type="PANTHER" id="PTHR13224:SF6">
    <property type="entry name" value="MEDIATOR OF RNA POLYMERASE II TRANSCRIPTION SUBUNIT 16"/>
    <property type="match status" value="1"/>
</dbReference>
<dbReference type="PANTHER" id="PTHR13224">
    <property type="entry name" value="THYROID HORMONE RECEPTOR-ASSOCIATED PROTEIN-RELATED"/>
    <property type="match status" value="1"/>
</dbReference>
<dbReference type="Pfam" id="PF20719">
    <property type="entry name" value="Med16_C"/>
    <property type="match status" value="1"/>
</dbReference>
<dbReference type="Pfam" id="PF11635">
    <property type="entry name" value="Med16_N"/>
    <property type="match status" value="1"/>
</dbReference>
<dbReference type="SUPFAM" id="SSF50978">
    <property type="entry name" value="WD40 repeat-like"/>
    <property type="match status" value="1"/>
</dbReference>
<name>MED16_NEOFI</name>